<keyword id="KW-0968">Cytoplasmic vesicle</keyword>
<keyword id="KW-0333">Golgi apparatus</keyword>
<keyword id="KW-0472">Membrane</keyword>
<keyword id="KW-0653">Protein transport</keyword>
<keyword id="KW-1185">Reference proteome</keyword>
<keyword id="KW-0813">Transport</keyword>
<gene>
    <name type="primary">Ap3m2</name>
</gene>
<reference key="1">
    <citation type="submission" date="2001-06" db="EMBL/GenBank/DDBJ databases">
        <title>Molecular cloning of the mouse m3B, a subunit of the neuron-specific AP-3B complex.</title>
        <authorList>
            <person name="Nakatsu F."/>
            <person name="Nakamura N."/>
            <person name="Shioda N."/>
            <person name="Saito T."/>
            <person name="Ohno H."/>
        </authorList>
    </citation>
    <scope>NUCLEOTIDE SEQUENCE [MRNA]</scope>
</reference>
<reference key="2">
    <citation type="journal article" date="2005" name="Science">
        <title>The transcriptional landscape of the mammalian genome.</title>
        <authorList>
            <person name="Carninci P."/>
            <person name="Kasukawa T."/>
            <person name="Katayama S."/>
            <person name="Gough J."/>
            <person name="Frith M.C."/>
            <person name="Maeda N."/>
            <person name="Oyama R."/>
            <person name="Ravasi T."/>
            <person name="Lenhard B."/>
            <person name="Wells C."/>
            <person name="Kodzius R."/>
            <person name="Shimokawa K."/>
            <person name="Bajic V.B."/>
            <person name="Brenner S.E."/>
            <person name="Batalov S."/>
            <person name="Forrest A.R."/>
            <person name="Zavolan M."/>
            <person name="Davis M.J."/>
            <person name="Wilming L.G."/>
            <person name="Aidinis V."/>
            <person name="Allen J.E."/>
            <person name="Ambesi-Impiombato A."/>
            <person name="Apweiler R."/>
            <person name="Aturaliya R.N."/>
            <person name="Bailey T.L."/>
            <person name="Bansal M."/>
            <person name="Baxter L."/>
            <person name="Beisel K.W."/>
            <person name="Bersano T."/>
            <person name="Bono H."/>
            <person name="Chalk A.M."/>
            <person name="Chiu K.P."/>
            <person name="Choudhary V."/>
            <person name="Christoffels A."/>
            <person name="Clutterbuck D.R."/>
            <person name="Crowe M.L."/>
            <person name="Dalla E."/>
            <person name="Dalrymple B.P."/>
            <person name="de Bono B."/>
            <person name="Della Gatta G."/>
            <person name="di Bernardo D."/>
            <person name="Down T."/>
            <person name="Engstrom P."/>
            <person name="Fagiolini M."/>
            <person name="Faulkner G."/>
            <person name="Fletcher C.F."/>
            <person name="Fukushima T."/>
            <person name="Furuno M."/>
            <person name="Futaki S."/>
            <person name="Gariboldi M."/>
            <person name="Georgii-Hemming P."/>
            <person name="Gingeras T.R."/>
            <person name="Gojobori T."/>
            <person name="Green R.E."/>
            <person name="Gustincich S."/>
            <person name="Harbers M."/>
            <person name="Hayashi Y."/>
            <person name="Hensch T.K."/>
            <person name="Hirokawa N."/>
            <person name="Hill D."/>
            <person name="Huminiecki L."/>
            <person name="Iacono M."/>
            <person name="Ikeo K."/>
            <person name="Iwama A."/>
            <person name="Ishikawa T."/>
            <person name="Jakt M."/>
            <person name="Kanapin A."/>
            <person name="Katoh M."/>
            <person name="Kawasawa Y."/>
            <person name="Kelso J."/>
            <person name="Kitamura H."/>
            <person name="Kitano H."/>
            <person name="Kollias G."/>
            <person name="Krishnan S.P."/>
            <person name="Kruger A."/>
            <person name="Kummerfeld S.K."/>
            <person name="Kurochkin I.V."/>
            <person name="Lareau L.F."/>
            <person name="Lazarevic D."/>
            <person name="Lipovich L."/>
            <person name="Liu J."/>
            <person name="Liuni S."/>
            <person name="McWilliam S."/>
            <person name="Madan Babu M."/>
            <person name="Madera M."/>
            <person name="Marchionni L."/>
            <person name="Matsuda H."/>
            <person name="Matsuzawa S."/>
            <person name="Miki H."/>
            <person name="Mignone F."/>
            <person name="Miyake S."/>
            <person name="Morris K."/>
            <person name="Mottagui-Tabar S."/>
            <person name="Mulder N."/>
            <person name="Nakano N."/>
            <person name="Nakauchi H."/>
            <person name="Ng P."/>
            <person name="Nilsson R."/>
            <person name="Nishiguchi S."/>
            <person name="Nishikawa S."/>
            <person name="Nori F."/>
            <person name="Ohara O."/>
            <person name="Okazaki Y."/>
            <person name="Orlando V."/>
            <person name="Pang K.C."/>
            <person name="Pavan W.J."/>
            <person name="Pavesi G."/>
            <person name="Pesole G."/>
            <person name="Petrovsky N."/>
            <person name="Piazza S."/>
            <person name="Reed J."/>
            <person name="Reid J.F."/>
            <person name="Ring B.Z."/>
            <person name="Ringwald M."/>
            <person name="Rost B."/>
            <person name="Ruan Y."/>
            <person name="Salzberg S.L."/>
            <person name="Sandelin A."/>
            <person name="Schneider C."/>
            <person name="Schoenbach C."/>
            <person name="Sekiguchi K."/>
            <person name="Semple C.A."/>
            <person name="Seno S."/>
            <person name="Sessa L."/>
            <person name="Sheng Y."/>
            <person name="Shibata Y."/>
            <person name="Shimada H."/>
            <person name="Shimada K."/>
            <person name="Silva D."/>
            <person name="Sinclair B."/>
            <person name="Sperling S."/>
            <person name="Stupka E."/>
            <person name="Sugiura K."/>
            <person name="Sultana R."/>
            <person name="Takenaka Y."/>
            <person name="Taki K."/>
            <person name="Tammoja K."/>
            <person name="Tan S.L."/>
            <person name="Tang S."/>
            <person name="Taylor M.S."/>
            <person name="Tegner J."/>
            <person name="Teichmann S.A."/>
            <person name="Ueda H.R."/>
            <person name="van Nimwegen E."/>
            <person name="Verardo R."/>
            <person name="Wei C.L."/>
            <person name="Yagi K."/>
            <person name="Yamanishi H."/>
            <person name="Zabarovsky E."/>
            <person name="Zhu S."/>
            <person name="Zimmer A."/>
            <person name="Hide W."/>
            <person name="Bult C."/>
            <person name="Grimmond S.M."/>
            <person name="Teasdale R.D."/>
            <person name="Liu E.T."/>
            <person name="Brusic V."/>
            <person name="Quackenbush J."/>
            <person name="Wahlestedt C."/>
            <person name="Mattick J.S."/>
            <person name="Hume D.A."/>
            <person name="Kai C."/>
            <person name="Sasaki D."/>
            <person name="Tomaru Y."/>
            <person name="Fukuda S."/>
            <person name="Kanamori-Katayama M."/>
            <person name="Suzuki M."/>
            <person name="Aoki J."/>
            <person name="Arakawa T."/>
            <person name="Iida J."/>
            <person name="Imamura K."/>
            <person name="Itoh M."/>
            <person name="Kato T."/>
            <person name="Kawaji H."/>
            <person name="Kawagashira N."/>
            <person name="Kawashima T."/>
            <person name="Kojima M."/>
            <person name="Kondo S."/>
            <person name="Konno H."/>
            <person name="Nakano K."/>
            <person name="Ninomiya N."/>
            <person name="Nishio T."/>
            <person name="Okada M."/>
            <person name="Plessy C."/>
            <person name="Shibata K."/>
            <person name="Shiraki T."/>
            <person name="Suzuki S."/>
            <person name="Tagami M."/>
            <person name="Waki K."/>
            <person name="Watahiki A."/>
            <person name="Okamura-Oho Y."/>
            <person name="Suzuki H."/>
            <person name="Kawai J."/>
            <person name="Hayashizaki Y."/>
        </authorList>
    </citation>
    <scope>NUCLEOTIDE SEQUENCE [LARGE SCALE MRNA]</scope>
    <source>
        <strain>C57BL/6J</strain>
        <tissue>Corpus striatum</tissue>
        <tissue>Medulla oblongata</tissue>
        <tissue>Pituitary</tissue>
        <tissue>Spinal cord</tissue>
    </source>
</reference>
<reference key="3">
    <citation type="journal article" date="2004" name="Genome Res.">
        <title>The status, quality, and expansion of the NIH full-length cDNA project: the Mammalian Gene Collection (MGC).</title>
        <authorList>
            <consortium name="The MGC Project Team"/>
        </authorList>
    </citation>
    <scope>NUCLEOTIDE SEQUENCE [LARGE SCALE MRNA]</scope>
    <source>
        <strain>FVB/N</strain>
        <tissue>Eye</tissue>
        <tissue>Mammary tumor</tissue>
    </source>
</reference>
<reference key="4">
    <citation type="journal article" date="2010" name="Cell">
        <title>A tissue-specific atlas of mouse protein phosphorylation and expression.</title>
        <authorList>
            <person name="Huttlin E.L."/>
            <person name="Jedrychowski M.P."/>
            <person name="Elias J.E."/>
            <person name="Goswami T."/>
            <person name="Rad R."/>
            <person name="Beausoleil S.A."/>
            <person name="Villen J."/>
            <person name="Haas W."/>
            <person name="Sowa M.E."/>
            <person name="Gygi S.P."/>
        </authorList>
    </citation>
    <scope>IDENTIFICATION BY MASS SPECTROMETRY [LARGE SCALE ANALYSIS]</scope>
    <source>
        <tissue>Brain</tissue>
    </source>
</reference>
<reference key="5">
    <citation type="journal article" date="2011" name="Mol. Biol. Cell">
        <title>The schizophrenia susceptibility factor dysbindin and its associated complex sort cargoes from cell bodies to the synapse.</title>
        <authorList>
            <person name="Larimore J."/>
            <person name="Tornieri K."/>
            <person name="Ryder P.V."/>
            <person name="Gokhale A."/>
            <person name="Zlatic S.A."/>
            <person name="Craige B."/>
            <person name="Lee J.D."/>
            <person name="Talbot K."/>
            <person name="Pare J.F."/>
            <person name="Smith Y."/>
            <person name="Faundez V."/>
        </authorList>
    </citation>
    <scope>FUNCTION</scope>
    <scope>ASSOCIATION WITH THE BLOC-1 COMPLEX</scope>
</reference>
<sequence length="418" mass="46916">MIHSLFLINSSGDIFLEKHWKSVVSRSVCDYFFEAQERATEAENVPPVIPTPHHYLLSVYRHKIFFVAVIQTEVPPLFVIEFLHRVVDTFQDYFGVCSEPVIKDNVVVVYEVLEEMLDNGFPLATESNILKELIKPPTILRTVVNTITGSTNVGDQLPTGQLSVVPWRRTGVKYTNNEAYFDVVEEIDAIIDKSGSTVTAEIQGVIDACVKLTGMPDLTLSFMNPRLLDDVSFHPCVRFKRWESERILSFIPPDGNFRLLAYHVSAQNLVAIPVYVKHSISFRDSSSLGRFEITVGPKQTMGKTIEGVIVTSQMPKGVLNMSLTPSQGTHTFDPVTKMLSWDVGKINPQKLPSLKGTMGLQVGASKPDENPTINLQFKIQQLAISGLKVNRLDMYGEKYKPFKGIKYMTKAGKFQVRT</sequence>
<proteinExistence type="evidence at protein level"/>
<accession>Q8R2R9</accession>
<accession>Q3UYJ3</accession>
<accession>Q923G7</accession>
<evidence type="ECO:0000250" key="1"/>
<evidence type="ECO:0000255" key="2">
    <source>
        <dbReference type="PROSITE-ProRule" id="PRU00404"/>
    </source>
</evidence>
<evidence type="ECO:0000269" key="3">
    <source>
    </source>
</evidence>
<evidence type="ECO:0000305" key="4"/>
<feature type="chain" id="PRO_0000193785" description="AP-3 complex subunit mu-2">
    <location>
        <begin position="1"/>
        <end position="418"/>
    </location>
</feature>
<feature type="domain" description="MHD" evidence="2">
    <location>
        <begin position="176"/>
        <end position="417"/>
    </location>
</feature>
<feature type="sequence conflict" description="In Ref. 1; AAK73278." evidence="4" ref="1">
    <original>INP</original>
    <variation>LNQ</variation>
    <location>
        <begin position="346"/>
        <end position="348"/>
    </location>
</feature>
<dbReference type="EMBL" id="AY039763">
    <property type="protein sequence ID" value="AAK73278.1"/>
    <property type="molecule type" value="mRNA"/>
</dbReference>
<dbReference type="EMBL" id="AK077365">
    <property type="protein sequence ID" value="BAC36770.1"/>
    <property type="molecule type" value="mRNA"/>
</dbReference>
<dbReference type="EMBL" id="AK081220">
    <property type="protein sequence ID" value="BAC38169.1"/>
    <property type="molecule type" value="mRNA"/>
</dbReference>
<dbReference type="EMBL" id="AK082988">
    <property type="protein sequence ID" value="BAC38723.1"/>
    <property type="molecule type" value="mRNA"/>
</dbReference>
<dbReference type="EMBL" id="AK134634">
    <property type="protein sequence ID" value="BAE22219.1"/>
    <property type="molecule type" value="mRNA"/>
</dbReference>
<dbReference type="EMBL" id="BC027301">
    <property type="protein sequence ID" value="AAH27301.1"/>
    <property type="molecule type" value="mRNA"/>
</dbReference>
<dbReference type="EMBL" id="BC030484">
    <property type="protein sequence ID" value="AAH30484.1"/>
    <property type="molecule type" value="mRNA"/>
</dbReference>
<dbReference type="CCDS" id="CCDS22184.1"/>
<dbReference type="RefSeq" id="NP_001116292.1">
    <property type="nucleotide sequence ID" value="NM_001122820.1"/>
</dbReference>
<dbReference type="RefSeq" id="NP_083781.2">
    <property type="nucleotide sequence ID" value="NM_029505.3"/>
</dbReference>
<dbReference type="RefSeq" id="XP_030099566.1">
    <property type="nucleotide sequence ID" value="XM_030243706.1"/>
</dbReference>
<dbReference type="SMR" id="Q8R2R9"/>
<dbReference type="BioGRID" id="211117">
    <property type="interactions" value="7"/>
</dbReference>
<dbReference type="ComplexPortal" id="CPX-5147">
    <property type="entry name" value="Neuronal AP-3 Adaptor complex, sigma3a variant"/>
</dbReference>
<dbReference type="ComplexPortal" id="CPX-5148">
    <property type="entry name" value="Neuronal AP-3 Adaptor complex, sigma3b variant"/>
</dbReference>
<dbReference type="CORUM" id="Q8R2R9"/>
<dbReference type="FunCoup" id="Q8R2R9">
    <property type="interactions" value="2323"/>
</dbReference>
<dbReference type="IntAct" id="Q8R2R9">
    <property type="interactions" value="1"/>
</dbReference>
<dbReference type="MINT" id="Q8R2R9"/>
<dbReference type="STRING" id="10090.ENSMUSP00000128446"/>
<dbReference type="GlyGen" id="Q8R2R9">
    <property type="glycosylation" value="1 site, 1 O-linked glycan (1 site)"/>
</dbReference>
<dbReference type="iPTMnet" id="Q8R2R9"/>
<dbReference type="MetOSite" id="Q8R2R9"/>
<dbReference type="PhosphoSitePlus" id="Q8R2R9"/>
<dbReference type="SwissPalm" id="Q8R2R9"/>
<dbReference type="jPOST" id="Q8R2R9"/>
<dbReference type="PaxDb" id="10090-ENSMUSP00000128446"/>
<dbReference type="PeptideAtlas" id="Q8R2R9"/>
<dbReference type="ProteomicsDB" id="296211"/>
<dbReference type="Pumba" id="Q8R2R9"/>
<dbReference type="Antibodypedia" id="24004">
    <property type="antibodies" value="83 antibodies from 21 providers"/>
</dbReference>
<dbReference type="DNASU" id="64933"/>
<dbReference type="Ensembl" id="ENSMUST00000163739.3">
    <property type="protein sequence ID" value="ENSMUSP00000128446.2"/>
    <property type="gene ID" value="ENSMUSG00000031539.7"/>
</dbReference>
<dbReference type="Ensembl" id="ENSMUST00000210656.2">
    <property type="protein sequence ID" value="ENSMUSP00000147967.2"/>
    <property type="gene ID" value="ENSMUSG00000031539.7"/>
</dbReference>
<dbReference type="GeneID" id="64933"/>
<dbReference type="KEGG" id="mmu:64933"/>
<dbReference type="UCSC" id="uc009ldy.2">
    <property type="organism name" value="mouse"/>
</dbReference>
<dbReference type="AGR" id="MGI:1929214"/>
<dbReference type="CTD" id="10947"/>
<dbReference type="MGI" id="MGI:1929214">
    <property type="gene designation" value="Ap3m2"/>
</dbReference>
<dbReference type="VEuPathDB" id="HostDB:ENSMUSG00000031539"/>
<dbReference type="eggNOG" id="KOG2740">
    <property type="taxonomic scope" value="Eukaryota"/>
</dbReference>
<dbReference type="GeneTree" id="ENSGT00940000157991"/>
<dbReference type="HOGENOM" id="CLU_026996_6_2_1"/>
<dbReference type="InParanoid" id="Q8R2R9"/>
<dbReference type="OMA" id="LIWNIGK"/>
<dbReference type="OrthoDB" id="870at2759"/>
<dbReference type="PhylomeDB" id="Q8R2R9"/>
<dbReference type="TreeFam" id="TF315187"/>
<dbReference type="BioGRID-ORCS" id="64933">
    <property type="hits" value="2 hits in 78 CRISPR screens"/>
</dbReference>
<dbReference type="CD-CODE" id="CE726F99">
    <property type="entry name" value="Postsynaptic density"/>
</dbReference>
<dbReference type="ChiTaRS" id="Ap3m2">
    <property type="organism name" value="mouse"/>
</dbReference>
<dbReference type="PRO" id="PR:Q8R2R9"/>
<dbReference type="Proteomes" id="UP000000589">
    <property type="component" value="Chromosome 8"/>
</dbReference>
<dbReference type="RNAct" id="Q8R2R9">
    <property type="molecule type" value="protein"/>
</dbReference>
<dbReference type="Bgee" id="ENSMUSG00000031539">
    <property type="expression patterns" value="Expressed in glossopharyngeal ganglion and 223 other cell types or tissues"/>
</dbReference>
<dbReference type="GO" id="GO:0030123">
    <property type="term" value="C:AP-3 adaptor complex"/>
    <property type="evidence" value="ECO:0000303"/>
    <property type="project" value="ComplexPortal"/>
</dbReference>
<dbReference type="GO" id="GO:1904115">
    <property type="term" value="C:axon cytoplasm"/>
    <property type="evidence" value="ECO:0007669"/>
    <property type="project" value="GOC"/>
</dbReference>
<dbReference type="GO" id="GO:0030131">
    <property type="term" value="C:clathrin adaptor complex"/>
    <property type="evidence" value="ECO:0007669"/>
    <property type="project" value="InterPro"/>
</dbReference>
<dbReference type="GO" id="GO:0030659">
    <property type="term" value="C:cytoplasmic vesicle membrane"/>
    <property type="evidence" value="ECO:0007669"/>
    <property type="project" value="UniProtKB-SubCell"/>
</dbReference>
<dbReference type="GO" id="GO:0005769">
    <property type="term" value="C:early endosome"/>
    <property type="evidence" value="ECO:0000303"/>
    <property type="project" value="ComplexPortal"/>
</dbReference>
<dbReference type="GO" id="GO:0098982">
    <property type="term" value="C:GABA-ergic synapse"/>
    <property type="evidence" value="ECO:0000314"/>
    <property type="project" value="SynGO"/>
</dbReference>
<dbReference type="GO" id="GO:0098978">
    <property type="term" value="C:glutamatergic synapse"/>
    <property type="evidence" value="ECO:0000314"/>
    <property type="project" value="SynGO"/>
</dbReference>
<dbReference type="GO" id="GO:0005794">
    <property type="term" value="C:Golgi apparatus"/>
    <property type="evidence" value="ECO:0007669"/>
    <property type="project" value="UniProtKB-SubCell"/>
</dbReference>
<dbReference type="GO" id="GO:0008021">
    <property type="term" value="C:synaptic vesicle"/>
    <property type="evidence" value="ECO:0007669"/>
    <property type="project" value="Ensembl"/>
</dbReference>
<dbReference type="GO" id="GO:0008089">
    <property type="term" value="P:anterograde axonal transport"/>
    <property type="evidence" value="ECO:0000315"/>
    <property type="project" value="UniProtKB"/>
</dbReference>
<dbReference type="GO" id="GO:0048490">
    <property type="term" value="P:anterograde synaptic vesicle transport"/>
    <property type="evidence" value="ECO:0000315"/>
    <property type="project" value="UniProtKB"/>
</dbReference>
<dbReference type="GO" id="GO:0035654">
    <property type="term" value="P:clathrin-coated vesicle cargo loading, AP-3-mediated"/>
    <property type="evidence" value="ECO:0000303"/>
    <property type="project" value="ComplexPortal"/>
</dbReference>
<dbReference type="GO" id="GO:0006886">
    <property type="term" value="P:intracellular protein transport"/>
    <property type="evidence" value="ECO:0007669"/>
    <property type="project" value="InterPro"/>
</dbReference>
<dbReference type="GO" id="GO:0046907">
    <property type="term" value="P:intracellular transport"/>
    <property type="evidence" value="ECO:0000303"/>
    <property type="project" value="ComplexPortal"/>
</dbReference>
<dbReference type="GO" id="GO:0016183">
    <property type="term" value="P:synaptic vesicle coating"/>
    <property type="evidence" value="ECO:0000303"/>
    <property type="project" value="ComplexPortal"/>
</dbReference>
<dbReference type="GO" id="GO:0048488">
    <property type="term" value="P:synaptic vesicle endocytosis"/>
    <property type="evidence" value="ECO:0000314"/>
    <property type="project" value="SynGO"/>
</dbReference>
<dbReference type="GO" id="GO:0036465">
    <property type="term" value="P:synaptic vesicle recycling"/>
    <property type="evidence" value="ECO:0000303"/>
    <property type="project" value="ComplexPortal"/>
</dbReference>
<dbReference type="CDD" id="cd14837">
    <property type="entry name" value="AP3_Mu_N"/>
    <property type="match status" value="1"/>
</dbReference>
<dbReference type="FunFam" id="3.30.450.60:FF:000012">
    <property type="entry name" value="AP-3 complex subunit mu-1 isoform X1"/>
    <property type="match status" value="1"/>
</dbReference>
<dbReference type="FunFam" id="2.60.40.1170:FF:000006">
    <property type="entry name" value="Putative AP-3 complex subunit mu-2-like"/>
    <property type="match status" value="1"/>
</dbReference>
<dbReference type="Gene3D" id="3.30.450.60">
    <property type="match status" value="1"/>
</dbReference>
<dbReference type="Gene3D" id="2.60.40.1170">
    <property type="entry name" value="Mu homology domain, subdomain B"/>
    <property type="match status" value="2"/>
</dbReference>
<dbReference type="InterPro" id="IPR050431">
    <property type="entry name" value="Adaptor_comp_med_subunit"/>
</dbReference>
<dbReference type="InterPro" id="IPR036168">
    <property type="entry name" value="AP2_Mu_C_sf"/>
</dbReference>
<dbReference type="InterPro" id="IPR022775">
    <property type="entry name" value="AP_mu_sigma_su"/>
</dbReference>
<dbReference type="InterPro" id="IPR001392">
    <property type="entry name" value="Clathrin_mu"/>
</dbReference>
<dbReference type="InterPro" id="IPR018240">
    <property type="entry name" value="Clathrin_mu_CS"/>
</dbReference>
<dbReference type="InterPro" id="IPR011012">
    <property type="entry name" value="Longin-like_dom_sf"/>
</dbReference>
<dbReference type="InterPro" id="IPR028565">
    <property type="entry name" value="MHD"/>
</dbReference>
<dbReference type="PANTHER" id="PTHR10529">
    <property type="entry name" value="AP COMPLEX SUBUNIT MU"/>
    <property type="match status" value="1"/>
</dbReference>
<dbReference type="Pfam" id="PF00928">
    <property type="entry name" value="Adap_comp_sub"/>
    <property type="match status" value="1"/>
</dbReference>
<dbReference type="Pfam" id="PF01217">
    <property type="entry name" value="Clat_adaptor_s"/>
    <property type="match status" value="1"/>
</dbReference>
<dbReference type="PIRSF" id="PIRSF005992">
    <property type="entry name" value="Clathrin_mu"/>
    <property type="match status" value="1"/>
</dbReference>
<dbReference type="PRINTS" id="PR00314">
    <property type="entry name" value="CLATHRINADPT"/>
</dbReference>
<dbReference type="SUPFAM" id="SSF49447">
    <property type="entry name" value="Second domain of Mu2 adaptin subunit (ap50) of ap2 adaptor"/>
    <property type="match status" value="1"/>
</dbReference>
<dbReference type="SUPFAM" id="SSF64356">
    <property type="entry name" value="SNARE-like"/>
    <property type="match status" value="1"/>
</dbReference>
<dbReference type="PROSITE" id="PS00990">
    <property type="entry name" value="CLAT_ADAPTOR_M_1"/>
    <property type="match status" value="1"/>
</dbReference>
<dbReference type="PROSITE" id="PS00991">
    <property type="entry name" value="CLAT_ADAPTOR_M_2"/>
    <property type="match status" value="1"/>
</dbReference>
<dbReference type="PROSITE" id="PS51072">
    <property type="entry name" value="MHD"/>
    <property type="match status" value="1"/>
</dbReference>
<comment type="function">
    <text evidence="1 3">Component of the adaptor complexes which link clathrin to receptors in coated vesicles. Clathrin-associated protein complexes are believed to interact with the cytoplasmic tails of membrane proteins, leading to their selection and concentration. Ap47 is a subunit of the plasma membrane adaptor (By similarity). In concert with the BLOC-1 complex, AP-3 is required to target cargos into vesicles assembled at cell bodies for delivery into neurites and nerve terminals.</text>
</comment>
<comment type="subunit">
    <text evidence="1">Adaptor protein complex 3 (AP-3) is a heterotetramer composed of two large adaptins (delta-type subunit AP3D1 and beta-type subunit AP3B1 or AP3B2), a medium adaptin (mu-type subunit AP3M1 or AP3M2) and a small adaptin (sigma-type subunit APS1 or AP3S2) (By similarity). AP-3 associates with the BLOC-1 complex.</text>
</comment>
<comment type="subcellular location">
    <subcellularLocation>
        <location>Golgi apparatus</location>
    </subcellularLocation>
    <subcellularLocation>
        <location evidence="1">Cytoplasmic vesicle membrane</location>
        <topology evidence="1">Peripheral membrane protein</topology>
        <orientation evidence="1">Cytoplasmic side</orientation>
    </subcellularLocation>
    <text evidence="1">Component of the coat surrounding the cytoplasmic face of coated vesicles located at the Golgi complex.</text>
</comment>
<comment type="similarity">
    <text evidence="4">Belongs to the adaptor complexes medium subunit family.</text>
</comment>
<name>AP3M2_MOUSE</name>
<organism>
    <name type="scientific">Mus musculus</name>
    <name type="common">Mouse</name>
    <dbReference type="NCBI Taxonomy" id="10090"/>
    <lineage>
        <taxon>Eukaryota</taxon>
        <taxon>Metazoa</taxon>
        <taxon>Chordata</taxon>
        <taxon>Craniata</taxon>
        <taxon>Vertebrata</taxon>
        <taxon>Euteleostomi</taxon>
        <taxon>Mammalia</taxon>
        <taxon>Eutheria</taxon>
        <taxon>Euarchontoglires</taxon>
        <taxon>Glires</taxon>
        <taxon>Rodentia</taxon>
        <taxon>Myomorpha</taxon>
        <taxon>Muroidea</taxon>
        <taxon>Muridae</taxon>
        <taxon>Murinae</taxon>
        <taxon>Mus</taxon>
        <taxon>Mus</taxon>
    </lineage>
</organism>
<protein>
    <recommendedName>
        <fullName>AP-3 complex subunit mu-2</fullName>
    </recommendedName>
    <alternativeName>
        <fullName>Adaptor-related protein complex 3 subunit mu-2</fullName>
    </alternativeName>
    <alternativeName>
        <fullName>Clathrin assembly protein assembly protein complex 3 mu-2 medium chain</fullName>
    </alternativeName>
    <alternativeName>
        <fullName>Clathrin coat assembly protein AP47 homolog 2</fullName>
    </alternativeName>
    <alternativeName>
        <fullName>Clathrin coat-associated protein AP47 homolog 2</fullName>
    </alternativeName>
    <alternativeName>
        <fullName>Golgi adaptor AP-1 47 kDa protein homolog 2</fullName>
    </alternativeName>
    <alternativeName>
        <fullName>HA1 47 kDa subunit homolog 2</fullName>
    </alternativeName>
    <alternativeName>
        <fullName>Mu3B-adaptin</fullName>
        <shortName>m3B</shortName>
    </alternativeName>
    <alternativeName>
        <fullName>P47B</fullName>
    </alternativeName>
</protein>